<dbReference type="EC" id="1.2.1.8" evidence="1"/>
<dbReference type="EMBL" id="CP000970">
    <property type="protein sequence ID" value="ACB17468.1"/>
    <property type="molecule type" value="Genomic_DNA"/>
</dbReference>
<dbReference type="RefSeq" id="WP_000089074.1">
    <property type="nucleotide sequence ID" value="NC_010498.1"/>
</dbReference>
<dbReference type="SMR" id="B1LIJ8"/>
<dbReference type="KEGG" id="ecm:EcSMS35_0343"/>
<dbReference type="HOGENOM" id="CLU_005391_0_0_6"/>
<dbReference type="UniPathway" id="UPA00529">
    <property type="reaction ID" value="UER00386"/>
</dbReference>
<dbReference type="Proteomes" id="UP000007011">
    <property type="component" value="Chromosome"/>
</dbReference>
<dbReference type="GO" id="GO:0008802">
    <property type="term" value="F:betaine-aldehyde dehydrogenase (NAD+) activity"/>
    <property type="evidence" value="ECO:0007669"/>
    <property type="project" value="UniProtKB-UniRule"/>
</dbReference>
<dbReference type="GO" id="GO:0046872">
    <property type="term" value="F:metal ion binding"/>
    <property type="evidence" value="ECO:0007669"/>
    <property type="project" value="UniProtKB-KW"/>
</dbReference>
<dbReference type="GO" id="GO:0019285">
    <property type="term" value="P:glycine betaine biosynthetic process from choline"/>
    <property type="evidence" value="ECO:0007669"/>
    <property type="project" value="UniProtKB-UniRule"/>
</dbReference>
<dbReference type="CDD" id="cd07090">
    <property type="entry name" value="ALDH_F9_TMBADH"/>
    <property type="match status" value="1"/>
</dbReference>
<dbReference type="FunFam" id="3.40.309.10:FF:000014">
    <property type="entry name" value="NAD/NADP-dependent betaine aldehyde dehydrogenase"/>
    <property type="match status" value="1"/>
</dbReference>
<dbReference type="FunFam" id="3.40.605.10:FF:000007">
    <property type="entry name" value="NAD/NADP-dependent betaine aldehyde dehydrogenase"/>
    <property type="match status" value="1"/>
</dbReference>
<dbReference type="Gene3D" id="3.40.605.10">
    <property type="entry name" value="Aldehyde Dehydrogenase, Chain A, domain 1"/>
    <property type="match status" value="1"/>
</dbReference>
<dbReference type="Gene3D" id="3.40.309.10">
    <property type="entry name" value="Aldehyde Dehydrogenase, Chain A, domain 2"/>
    <property type="match status" value="1"/>
</dbReference>
<dbReference type="HAMAP" id="MF_00804">
    <property type="entry name" value="BADH"/>
    <property type="match status" value="1"/>
</dbReference>
<dbReference type="InterPro" id="IPR016161">
    <property type="entry name" value="Ald_DH/histidinol_DH"/>
</dbReference>
<dbReference type="InterPro" id="IPR016163">
    <property type="entry name" value="Ald_DH_C"/>
</dbReference>
<dbReference type="InterPro" id="IPR016160">
    <property type="entry name" value="Ald_DH_CS_CYS"/>
</dbReference>
<dbReference type="InterPro" id="IPR029510">
    <property type="entry name" value="Ald_DH_CS_GLU"/>
</dbReference>
<dbReference type="InterPro" id="IPR016162">
    <property type="entry name" value="Ald_DH_N"/>
</dbReference>
<dbReference type="InterPro" id="IPR015590">
    <property type="entry name" value="Aldehyde_DH_dom"/>
</dbReference>
<dbReference type="InterPro" id="IPR011264">
    <property type="entry name" value="BADH"/>
</dbReference>
<dbReference type="NCBIfam" id="TIGR01804">
    <property type="entry name" value="BADH"/>
    <property type="match status" value="1"/>
</dbReference>
<dbReference type="NCBIfam" id="NF009725">
    <property type="entry name" value="PRK13252.1"/>
    <property type="match status" value="1"/>
</dbReference>
<dbReference type="PANTHER" id="PTHR11699">
    <property type="entry name" value="ALDEHYDE DEHYDROGENASE-RELATED"/>
    <property type="match status" value="1"/>
</dbReference>
<dbReference type="Pfam" id="PF00171">
    <property type="entry name" value="Aldedh"/>
    <property type="match status" value="1"/>
</dbReference>
<dbReference type="SUPFAM" id="SSF53720">
    <property type="entry name" value="ALDH-like"/>
    <property type="match status" value="1"/>
</dbReference>
<dbReference type="PROSITE" id="PS00070">
    <property type="entry name" value="ALDEHYDE_DEHYDR_CYS"/>
    <property type="match status" value="1"/>
</dbReference>
<dbReference type="PROSITE" id="PS00687">
    <property type="entry name" value="ALDEHYDE_DEHYDR_GLU"/>
    <property type="match status" value="1"/>
</dbReference>
<gene>
    <name evidence="1" type="primary">betB</name>
    <name type="ordered locus">EcSMS35_0343</name>
</gene>
<sequence length="490" mass="52935">MSRMAEQQLYIHGGYTSATSGRTFETINPANGNVLATVQAAGREDVDRAVKSAQQGQKIWAAMTAMERSRILRRAVDILRERNDELAKLETLDTGKAYSETSTVDIVTGADVLEYYAGLIPALEGSQIPLRETSFVYTRREPLGVVAGIGAWNYPIQIALWKSAPALAAGNAMIFKPSEVTPLTALKLAEIYSEAGLPDGVFNVLPGVGAETGQYLTEHPGIAKVSFTGGVASGKKVMANSAASSLKEVTMELGGKSPLIVFDDADLDLAADIAMMANFFSSGQVCTNGTRVFVPAKCKAAFEQKILARVERIRAGDVFDPQTNFGPLVSFPHRDNVLRYIAKGKEEGARVLCGGDVLKGDGFDNGAWVAPTVFTDCRDEMTIVREEIFGPVMSLLTYESEDEVIRRANDTDYGLAAGIVTADLNLAHRVIHQLEAGICWINTWGESPAEMPVGGYKHSGIGRENGVMTLQSYTQVKSIQVEMAKFQSIF</sequence>
<reference key="1">
    <citation type="journal article" date="2008" name="J. Bacteriol.">
        <title>Insights into the environmental resistance gene pool from the genome sequence of the multidrug-resistant environmental isolate Escherichia coli SMS-3-5.</title>
        <authorList>
            <person name="Fricke W.F."/>
            <person name="Wright M.S."/>
            <person name="Lindell A.H."/>
            <person name="Harkins D.M."/>
            <person name="Baker-Austin C."/>
            <person name="Ravel J."/>
            <person name="Stepanauskas R."/>
        </authorList>
    </citation>
    <scope>NUCLEOTIDE SEQUENCE [LARGE SCALE GENOMIC DNA]</scope>
    <source>
        <strain>SMS-3-5 / SECEC</strain>
    </source>
</reference>
<proteinExistence type="inferred from homology"/>
<protein>
    <recommendedName>
        <fullName evidence="1">Betaine aldehyde dehydrogenase</fullName>
        <shortName evidence="1">BADH</shortName>
        <ecNumber evidence="1">1.2.1.8</ecNumber>
    </recommendedName>
</protein>
<accession>B1LIJ8</accession>
<organism>
    <name type="scientific">Escherichia coli (strain SMS-3-5 / SECEC)</name>
    <dbReference type="NCBI Taxonomy" id="439855"/>
    <lineage>
        <taxon>Bacteria</taxon>
        <taxon>Pseudomonadati</taxon>
        <taxon>Pseudomonadota</taxon>
        <taxon>Gammaproteobacteria</taxon>
        <taxon>Enterobacterales</taxon>
        <taxon>Enterobacteriaceae</taxon>
        <taxon>Escherichia</taxon>
    </lineage>
</organism>
<comment type="function">
    <text evidence="1">Involved in the biosynthesis of the osmoprotectant glycine betaine. Catalyzes the irreversible oxidation of betaine aldehyde to the corresponding acid.</text>
</comment>
<comment type="catalytic activity">
    <reaction evidence="1">
        <text>betaine aldehyde + NAD(+) + H2O = glycine betaine + NADH + 2 H(+)</text>
        <dbReference type="Rhea" id="RHEA:15305"/>
        <dbReference type="ChEBI" id="CHEBI:15377"/>
        <dbReference type="ChEBI" id="CHEBI:15378"/>
        <dbReference type="ChEBI" id="CHEBI:15710"/>
        <dbReference type="ChEBI" id="CHEBI:17750"/>
        <dbReference type="ChEBI" id="CHEBI:57540"/>
        <dbReference type="ChEBI" id="CHEBI:57945"/>
        <dbReference type="EC" id="1.2.1.8"/>
    </reaction>
    <physiologicalReaction direction="left-to-right" evidence="1">
        <dbReference type="Rhea" id="RHEA:15306"/>
    </physiologicalReaction>
</comment>
<comment type="cofactor">
    <cofactor evidence="1">
        <name>K(+)</name>
        <dbReference type="ChEBI" id="CHEBI:29103"/>
    </cofactor>
    <text evidence="1">Binds 2 potassium ions per subunit.</text>
</comment>
<comment type="pathway">
    <text evidence="1">Amine and polyamine biosynthesis; betaine biosynthesis via choline pathway; betaine from betaine aldehyde: step 1/1.</text>
</comment>
<comment type="subunit">
    <text evidence="1">Dimer of dimers.</text>
</comment>
<comment type="similarity">
    <text evidence="1">Belongs to the aldehyde dehydrogenase family.</text>
</comment>
<feature type="chain" id="PRO_1000133953" description="Betaine aldehyde dehydrogenase">
    <location>
        <begin position="1"/>
        <end position="490"/>
    </location>
</feature>
<feature type="active site" description="Charge relay system" evidence="1">
    <location>
        <position position="162"/>
    </location>
</feature>
<feature type="active site" description="Proton acceptor" evidence="1">
    <location>
        <position position="252"/>
    </location>
</feature>
<feature type="active site" description="Nucleophile" evidence="1">
    <location>
        <position position="286"/>
    </location>
</feature>
<feature type="active site" description="Charge relay system" evidence="1">
    <location>
        <position position="464"/>
    </location>
</feature>
<feature type="binding site" evidence="1">
    <location>
        <position position="26"/>
    </location>
    <ligand>
        <name>K(+)</name>
        <dbReference type="ChEBI" id="CHEBI:29103"/>
        <label>1</label>
    </ligand>
</feature>
<feature type="binding site" evidence="1">
    <location>
        <position position="27"/>
    </location>
    <ligand>
        <name>K(+)</name>
        <dbReference type="ChEBI" id="CHEBI:29103"/>
        <label>1</label>
    </ligand>
</feature>
<feature type="binding site" evidence="1">
    <location>
        <position position="93"/>
    </location>
    <ligand>
        <name>K(+)</name>
        <dbReference type="ChEBI" id="CHEBI:29103"/>
        <label>1</label>
    </ligand>
</feature>
<feature type="binding site" evidence="1">
    <location>
        <begin position="150"/>
        <end position="152"/>
    </location>
    <ligand>
        <name>NAD(+)</name>
        <dbReference type="ChEBI" id="CHEBI:57540"/>
    </ligand>
</feature>
<feature type="binding site" evidence="1">
    <location>
        <begin position="176"/>
        <end position="179"/>
    </location>
    <ligand>
        <name>NAD(+)</name>
        <dbReference type="ChEBI" id="CHEBI:57540"/>
    </ligand>
</feature>
<feature type="binding site" evidence="1">
    <location>
        <position position="180"/>
    </location>
    <ligand>
        <name>K(+)</name>
        <dbReference type="ChEBI" id="CHEBI:29103"/>
        <label>1</label>
    </ligand>
</feature>
<feature type="binding site" evidence="1">
    <location>
        <begin position="230"/>
        <end position="233"/>
    </location>
    <ligand>
        <name>NAD(+)</name>
        <dbReference type="ChEBI" id="CHEBI:57540"/>
    </ligand>
</feature>
<feature type="binding site" evidence="1">
    <location>
        <position position="246"/>
    </location>
    <ligand>
        <name>K(+)</name>
        <dbReference type="ChEBI" id="CHEBI:29103"/>
        <label>2</label>
    </ligand>
</feature>
<feature type="binding site" evidence="1">
    <location>
        <position position="254"/>
    </location>
    <ligand>
        <name>NAD(+)</name>
        <dbReference type="ChEBI" id="CHEBI:57540"/>
    </ligand>
</feature>
<feature type="binding site" description="covalent" evidence="1">
    <location>
        <position position="286"/>
    </location>
    <ligand>
        <name>NAD(+)</name>
        <dbReference type="ChEBI" id="CHEBI:57540"/>
    </ligand>
</feature>
<feature type="binding site" evidence="1">
    <location>
        <position position="387"/>
    </location>
    <ligand>
        <name>NAD(+)</name>
        <dbReference type="ChEBI" id="CHEBI:57540"/>
    </ligand>
</feature>
<feature type="binding site" evidence="1">
    <location>
        <position position="457"/>
    </location>
    <ligand>
        <name>K(+)</name>
        <dbReference type="ChEBI" id="CHEBI:29103"/>
        <label>2</label>
    </ligand>
</feature>
<feature type="binding site" evidence="1">
    <location>
        <position position="460"/>
    </location>
    <ligand>
        <name>K(+)</name>
        <dbReference type="ChEBI" id="CHEBI:29103"/>
        <label>2</label>
    </ligand>
</feature>
<feature type="site" description="Seems to be a necessary countercharge to the potassium cations" evidence="1">
    <location>
        <position position="248"/>
    </location>
</feature>
<feature type="modified residue" description="Cysteine sulfenic acid (-SOH)" evidence="1">
    <location>
        <position position="286"/>
    </location>
</feature>
<keyword id="KW-0479">Metal-binding</keyword>
<keyword id="KW-0520">NAD</keyword>
<keyword id="KW-0521">NADP</keyword>
<keyword id="KW-0558">Oxidation</keyword>
<keyword id="KW-0560">Oxidoreductase</keyword>
<keyword id="KW-0630">Potassium</keyword>
<evidence type="ECO:0000255" key="1">
    <source>
        <dbReference type="HAMAP-Rule" id="MF_00804"/>
    </source>
</evidence>
<name>BETB_ECOSM</name>